<reference key="1">
    <citation type="journal article" date="2007" name="Photosyn. Res.">
        <title>Complete nucleotide sequence of the freshwater unicellular cyanobacterium Synechococcus elongatus PCC 6301 chromosome: gene content and organization.</title>
        <authorList>
            <person name="Sugita C."/>
            <person name="Ogata K."/>
            <person name="Shikata M."/>
            <person name="Jikuya H."/>
            <person name="Takano J."/>
            <person name="Furumichi M."/>
            <person name="Kanehisa M."/>
            <person name="Omata T."/>
            <person name="Sugiura M."/>
            <person name="Sugita M."/>
        </authorList>
    </citation>
    <scope>NUCLEOTIDE SEQUENCE [LARGE SCALE GENOMIC DNA]</scope>
    <source>
        <strain>ATCC 27144 / PCC 6301 / SAUG 1402/1</strain>
    </source>
</reference>
<name>MTNA_SYNP6</name>
<evidence type="ECO:0000255" key="1">
    <source>
        <dbReference type="HAMAP-Rule" id="MF_01678"/>
    </source>
</evidence>
<evidence type="ECO:0000305" key="2"/>
<proteinExistence type="inferred from homology"/>
<gene>
    <name evidence="1" type="primary">mtnA</name>
    <name type="ordered locus">syc2104_d</name>
</gene>
<dbReference type="EC" id="5.3.1.23" evidence="1"/>
<dbReference type="EMBL" id="AP008231">
    <property type="protein sequence ID" value="BAD80294.1"/>
    <property type="molecule type" value="Genomic_DNA"/>
</dbReference>
<dbReference type="RefSeq" id="WP_011244414.1">
    <property type="nucleotide sequence ID" value="NZ_CP085785.1"/>
</dbReference>
<dbReference type="SMR" id="Q5N076"/>
<dbReference type="GeneID" id="72430865"/>
<dbReference type="KEGG" id="syc:syc2104_d"/>
<dbReference type="eggNOG" id="COG0182">
    <property type="taxonomic scope" value="Bacteria"/>
</dbReference>
<dbReference type="UniPathway" id="UPA00904">
    <property type="reaction ID" value="UER00874"/>
</dbReference>
<dbReference type="Proteomes" id="UP000001175">
    <property type="component" value="Chromosome"/>
</dbReference>
<dbReference type="GO" id="GO:0046523">
    <property type="term" value="F:S-methyl-5-thioribose-1-phosphate isomerase activity"/>
    <property type="evidence" value="ECO:0007669"/>
    <property type="project" value="UniProtKB-UniRule"/>
</dbReference>
<dbReference type="GO" id="GO:0019509">
    <property type="term" value="P:L-methionine salvage from methylthioadenosine"/>
    <property type="evidence" value="ECO:0007669"/>
    <property type="project" value="UniProtKB-UniRule"/>
</dbReference>
<dbReference type="FunFam" id="1.20.120.420:FF:000003">
    <property type="entry name" value="Methylthioribose-1-phosphate isomerase"/>
    <property type="match status" value="1"/>
</dbReference>
<dbReference type="FunFam" id="3.40.50.10470:FF:000006">
    <property type="entry name" value="Methylthioribose-1-phosphate isomerase"/>
    <property type="match status" value="1"/>
</dbReference>
<dbReference type="Gene3D" id="1.20.120.420">
    <property type="entry name" value="translation initiation factor eif-2b, domain 1"/>
    <property type="match status" value="1"/>
</dbReference>
<dbReference type="Gene3D" id="3.40.50.10470">
    <property type="entry name" value="Translation initiation factor eif-2b, domain 2"/>
    <property type="match status" value="1"/>
</dbReference>
<dbReference type="HAMAP" id="MF_01678">
    <property type="entry name" value="Salvage_MtnA"/>
    <property type="match status" value="1"/>
</dbReference>
<dbReference type="InterPro" id="IPR000649">
    <property type="entry name" value="IF-2B-related"/>
</dbReference>
<dbReference type="InterPro" id="IPR005251">
    <property type="entry name" value="IF-M1Pi"/>
</dbReference>
<dbReference type="InterPro" id="IPR042529">
    <property type="entry name" value="IF_2B-like_C"/>
</dbReference>
<dbReference type="InterPro" id="IPR011559">
    <property type="entry name" value="Initiation_fac_2B_a/b/d"/>
</dbReference>
<dbReference type="InterPro" id="IPR027363">
    <property type="entry name" value="M1Pi_N"/>
</dbReference>
<dbReference type="InterPro" id="IPR037171">
    <property type="entry name" value="NagB/RpiA_transferase-like"/>
</dbReference>
<dbReference type="NCBIfam" id="TIGR00524">
    <property type="entry name" value="eIF-2B_rel"/>
    <property type="match status" value="1"/>
</dbReference>
<dbReference type="NCBIfam" id="NF004326">
    <property type="entry name" value="PRK05720.1"/>
    <property type="match status" value="1"/>
</dbReference>
<dbReference type="NCBIfam" id="TIGR00512">
    <property type="entry name" value="salvage_mtnA"/>
    <property type="match status" value="1"/>
</dbReference>
<dbReference type="PANTHER" id="PTHR43475">
    <property type="entry name" value="METHYLTHIORIBOSE-1-PHOSPHATE ISOMERASE"/>
    <property type="match status" value="1"/>
</dbReference>
<dbReference type="PANTHER" id="PTHR43475:SF1">
    <property type="entry name" value="METHYLTHIORIBOSE-1-PHOSPHATE ISOMERASE"/>
    <property type="match status" value="1"/>
</dbReference>
<dbReference type="Pfam" id="PF01008">
    <property type="entry name" value="IF-2B"/>
    <property type="match status" value="1"/>
</dbReference>
<dbReference type="SUPFAM" id="SSF100950">
    <property type="entry name" value="NagB/RpiA/CoA transferase-like"/>
    <property type="match status" value="1"/>
</dbReference>
<comment type="function">
    <text evidence="1">Catalyzes the interconversion of methylthioribose-1-phosphate (MTR-1-P) into methylthioribulose-1-phosphate (MTRu-1-P).</text>
</comment>
<comment type="catalytic activity">
    <reaction evidence="1">
        <text>5-(methylsulfanyl)-alpha-D-ribose 1-phosphate = 5-(methylsulfanyl)-D-ribulose 1-phosphate</text>
        <dbReference type="Rhea" id="RHEA:19989"/>
        <dbReference type="ChEBI" id="CHEBI:58533"/>
        <dbReference type="ChEBI" id="CHEBI:58548"/>
        <dbReference type="EC" id="5.3.1.23"/>
    </reaction>
</comment>
<comment type="pathway">
    <text evidence="1">Amino-acid biosynthesis; L-methionine biosynthesis via salvage pathway; L-methionine from S-methyl-5-thio-alpha-D-ribose 1-phosphate: step 1/6.</text>
</comment>
<comment type="similarity">
    <text evidence="2">Belongs to the eIF-2B alpha/beta/delta subunits family. MtnA subfamily.</text>
</comment>
<keyword id="KW-0028">Amino-acid biosynthesis</keyword>
<keyword id="KW-0413">Isomerase</keyword>
<keyword id="KW-0486">Methionine biosynthesis</keyword>
<sequence length="348" mass="37118">MSPFQSLLWTGSQLRLLDQRSLPQETQYRYYDTAAGVAQAIQDMVVRGAPAIGVAAAFGLVLTSQQSAMTDSADLRAQLAIAAETLKAARPTAVNLAWAVDRMLAAIANPDLEAAAIHATLLAAAQQLYDEDVAVNRQIGLNAQALIPQQANVIHHCNTGALATVDYGTALGIIRIAHEQGKQIHAYLDETRPRLQGANLSAFELQAYGVPHTVIVDGASGFLMRQQQIDCCLVGCDRVTANGDVANKIGTYNLALAAKAHGVPFYVACPISTIDRSLATGAEIEIEERDGREITEIRGQAIAPAGTKTWNPAFDITPAELVTAIITERGILYPPYGQALEQVLINPG</sequence>
<accession>Q5N076</accession>
<organism>
    <name type="scientific">Synechococcus sp. (strain ATCC 27144 / PCC 6301 / SAUG 1402/1)</name>
    <name type="common">Anacystis nidulans</name>
    <dbReference type="NCBI Taxonomy" id="269084"/>
    <lineage>
        <taxon>Bacteria</taxon>
        <taxon>Bacillati</taxon>
        <taxon>Cyanobacteriota</taxon>
        <taxon>Cyanophyceae</taxon>
        <taxon>Synechococcales</taxon>
        <taxon>Synechococcaceae</taxon>
        <taxon>Synechococcus</taxon>
    </lineage>
</organism>
<feature type="chain" id="PRO_0000357248" description="Methylthioribose-1-phosphate isomerase">
    <location>
        <begin position="1"/>
        <end position="348"/>
    </location>
</feature>
<feature type="active site" description="Proton donor" evidence="1">
    <location>
        <position position="237"/>
    </location>
</feature>
<feature type="binding site" evidence="1">
    <location>
        <begin position="47"/>
        <end position="49"/>
    </location>
    <ligand>
        <name>substrate</name>
    </ligand>
</feature>
<feature type="binding site" evidence="1">
    <location>
        <position position="90"/>
    </location>
    <ligand>
        <name>substrate</name>
    </ligand>
</feature>
<feature type="binding site" evidence="1">
    <location>
        <position position="196"/>
    </location>
    <ligand>
        <name>substrate</name>
    </ligand>
</feature>
<feature type="binding site" evidence="1">
    <location>
        <begin position="247"/>
        <end position="248"/>
    </location>
    <ligand>
        <name>substrate</name>
    </ligand>
</feature>
<feature type="site" description="Transition state stabilizer" evidence="1">
    <location>
        <position position="157"/>
    </location>
</feature>
<protein>
    <recommendedName>
        <fullName evidence="1">Methylthioribose-1-phosphate isomerase</fullName>
        <shortName evidence="1">M1Pi</shortName>
        <shortName evidence="1">MTR-1-P isomerase</shortName>
        <ecNumber evidence="1">5.3.1.23</ecNumber>
    </recommendedName>
    <alternativeName>
        <fullName evidence="1">S-methyl-5-thioribose-1-phosphate isomerase</fullName>
    </alternativeName>
</protein>